<protein>
    <recommendedName>
        <fullName evidence="1">Dual-action ribosomal maturation protein DarP</fullName>
    </recommendedName>
    <alternativeName>
        <fullName evidence="1">Large ribosomal subunit assembly factor DarP</fullName>
    </alternativeName>
</protein>
<comment type="function">
    <text evidence="1">Member of a network of 50S ribosomal subunit biogenesis factors which assembles along the 30S-50S interface, preventing incorrect 23S rRNA structures from forming. Promotes peptidyl transferase center (PTC) maturation.</text>
</comment>
<comment type="subcellular location">
    <subcellularLocation>
        <location evidence="1">Cytoplasm</location>
    </subcellularLocation>
    <text evidence="1">Associates with late stage pre-50S ribosomal subunits.</text>
</comment>
<comment type="similarity">
    <text evidence="1">Belongs to the DarP family.</text>
</comment>
<sequence length="193" mass="21918">MRGRDEDTGEFRGASRSQQRREALEIFDLGEKLVALTPAQLAKLPVPESLIPHIEESKRITSHIAHKRQLAFLAKHMRREDDETLAAIRDALDANSDTARREVAAIHRVERWRERLLADGDAALAELLEAYPAADRQQLRQLVRNAIHERAKNKPPRAYRELFQVLRDLSQEQGLESGDSGLEDGESALEDDE</sequence>
<reference key="1">
    <citation type="journal article" date="2005" name="Jpn. Agric. Res. Q.">
        <title>Genome sequence of Xanthomonas oryzae pv. oryzae suggests contribution of large numbers of effector genes and insertion sequences to its race diversity.</title>
        <authorList>
            <person name="Ochiai H."/>
            <person name="Inoue Y."/>
            <person name="Takeya M."/>
            <person name="Sasaki A."/>
            <person name="Kaku H."/>
        </authorList>
    </citation>
    <scope>NUCLEOTIDE SEQUENCE [LARGE SCALE GENOMIC DNA]</scope>
    <source>
        <strain>MAFF 311018</strain>
    </source>
</reference>
<gene>
    <name evidence="1" type="primary">darP</name>
    <name type="ordered locus">XOO3126</name>
</gene>
<proteinExistence type="inferred from homology"/>
<organism>
    <name type="scientific">Xanthomonas oryzae pv. oryzae (strain MAFF 311018)</name>
    <dbReference type="NCBI Taxonomy" id="342109"/>
    <lineage>
        <taxon>Bacteria</taxon>
        <taxon>Pseudomonadati</taxon>
        <taxon>Pseudomonadota</taxon>
        <taxon>Gammaproteobacteria</taxon>
        <taxon>Lysobacterales</taxon>
        <taxon>Lysobacteraceae</taxon>
        <taxon>Xanthomonas</taxon>
    </lineage>
</organism>
<evidence type="ECO:0000255" key="1">
    <source>
        <dbReference type="HAMAP-Rule" id="MF_00765"/>
    </source>
</evidence>
<evidence type="ECO:0000256" key="2">
    <source>
        <dbReference type="SAM" id="MobiDB-lite"/>
    </source>
</evidence>
<dbReference type="EMBL" id="AP008229">
    <property type="protein sequence ID" value="BAE69881.1"/>
    <property type="molecule type" value="Genomic_DNA"/>
</dbReference>
<dbReference type="SMR" id="Q2P0P6"/>
<dbReference type="KEGG" id="xom:XOO3126"/>
<dbReference type="HOGENOM" id="CLU_106757_0_0_6"/>
<dbReference type="GO" id="GO:0005829">
    <property type="term" value="C:cytosol"/>
    <property type="evidence" value="ECO:0007669"/>
    <property type="project" value="TreeGrafter"/>
</dbReference>
<dbReference type="GO" id="GO:0043022">
    <property type="term" value="F:ribosome binding"/>
    <property type="evidence" value="ECO:0007669"/>
    <property type="project" value="UniProtKB-UniRule"/>
</dbReference>
<dbReference type="GO" id="GO:0019843">
    <property type="term" value="F:rRNA binding"/>
    <property type="evidence" value="ECO:0007669"/>
    <property type="project" value="UniProtKB-UniRule"/>
</dbReference>
<dbReference type="GO" id="GO:1902626">
    <property type="term" value="P:assembly of large subunit precursor of preribosome"/>
    <property type="evidence" value="ECO:0007669"/>
    <property type="project" value="UniProtKB-UniRule"/>
</dbReference>
<dbReference type="CDD" id="cd16331">
    <property type="entry name" value="YjgA-like"/>
    <property type="match status" value="1"/>
</dbReference>
<dbReference type="FunFam" id="1.10.60.30:FF:000002">
    <property type="entry name" value="UPF0307 protein YjgA"/>
    <property type="match status" value="1"/>
</dbReference>
<dbReference type="Gene3D" id="1.10.60.30">
    <property type="entry name" value="PSPTO4464-like domains"/>
    <property type="match status" value="2"/>
</dbReference>
<dbReference type="HAMAP" id="MF_00765">
    <property type="entry name" value="DarP"/>
    <property type="match status" value="1"/>
</dbReference>
<dbReference type="InterPro" id="IPR006839">
    <property type="entry name" value="DarP"/>
</dbReference>
<dbReference type="InterPro" id="IPR023153">
    <property type="entry name" value="DarP_sf"/>
</dbReference>
<dbReference type="NCBIfam" id="NF003593">
    <property type="entry name" value="PRK05255.1-1"/>
    <property type="match status" value="1"/>
</dbReference>
<dbReference type="PANTHER" id="PTHR38101">
    <property type="entry name" value="UPF0307 PROTEIN YJGA"/>
    <property type="match status" value="1"/>
</dbReference>
<dbReference type="PANTHER" id="PTHR38101:SF1">
    <property type="entry name" value="UPF0307 PROTEIN YJGA"/>
    <property type="match status" value="1"/>
</dbReference>
<dbReference type="Pfam" id="PF04751">
    <property type="entry name" value="DarP"/>
    <property type="match status" value="1"/>
</dbReference>
<dbReference type="PIRSF" id="PIRSF016183">
    <property type="entry name" value="UCP016183"/>
    <property type="match status" value="1"/>
</dbReference>
<dbReference type="SUPFAM" id="SSF158710">
    <property type="entry name" value="PSPTO4464-like"/>
    <property type="match status" value="1"/>
</dbReference>
<accession>Q2P0P6</accession>
<keyword id="KW-0963">Cytoplasm</keyword>
<keyword id="KW-0690">Ribosome biogenesis</keyword>
<keyword id="KW-0694">RNA-binding</keyword>
<keyword id="KW-0699">rRNA-binding</keyword>
<feature type="chain" id="PRO_0000257649" description="Dual-action ribosomal maturation protein DarP">
    <location>
        <begin position="1"/>
        <end position="193"/>
    </location>
</feature>
<feature type="region of interest" description="Disordered" evidence="2">
    <location>
        <begin position="1"/>
        <end position="20"/>
    </location>
</feature>
<feature type="region of interest" description="Disordered" evidence="2">
    <location>
        <begin position="171"/>
        <end position="193"/>
    </location>
</feature>
<feature type="compositionally biased region" description="Basic and acidic residues" evidence="2">
    <location>
        <begin position="1"/>
        <end position="10"/>
    </location>
</feature>
<feature type="compositionally biased region" description="Acidic residues" evidence="2">
    <location>
        <begin position="181"/>
        <end position="193"/>
    </location>
</feature>
<name>DARP_XANOM</name>